<organism>
    <name type="scientific">Streptomyces coelicolor (strain ATCC BAA-471 / A3(2) / M145)</name>
    <dbReference type="NCBI Taxonomy" id="100226"/>
    <lineage>
        <taxon>Bacteria</taxon>
        <taxon>Bacillati</taxon>
        <taxon>Actinomycetota</taxon>
        <taxon>Actinomycetes</taxon>
        <taxon>Kitasatosporales</taxon>
        <taxon>Streptomycetaceae</taxon>
        <taxon>Streptomyces</taxon>
        <taxon>Streptomyces albidoflavus group</taxon>
    </lineage>
</organism>
<reference key="1">
    <citation type="journal article" date="2002" name="Nature">
        <title>Complete genome sequence of the model actinomycete Streptomyces coelicolor A3(2).</title>
        <authorList>
            <person name="Bentley S.D."/>
            <person name="Chater K.F."/>
            <person name="Cerdeno-Tarraga A.-M."/>
            <person name="Challis G.L."/>
            <person name="Thomson N.R."/>
            <person name="James K.D."/>
            <person name="Harris D.E."/>
            <person name="Quail M.A."/>
            <person name="Kieser H."/>
            <person name="Harper D."/>
            <person name="Bateman A."/>
            <person name="Brown S."/>
            <person name="Chandra G."/>
            <person name="Chen C.W."/>
            <person name="Collins M."/>
            <person name="Cronin A."/>
            <person name="Fraser A."/>
            <person name="Goble A."/>
            <person name="Hidalgo J."/>
            <person name="Hornsby T."/>
            <person name="Howarth S."/>
            <person name="Huang C.-H."/>
            <person name="Kieser T."/>
            <person name="Larke L."/>
            <person name="Murphy L.D."/>
            <person name="Oliver K."/>
            <person name="O'Neil S."/>
            <person name="Rabbinowitsch E."/>
            <person name="Rajandream M.A."/>
            <person name="Rutherford K.M."/>
            <person name="Rutter S."/>
            <person name="Seeger K."/>
            <person name="Saunders D."/>
            <person name="Sharp S."/>
            <person name="Squares R."/>
            <person name="Squares S."/>
            <person name="Taylor K."/>
            <person name="Warren T."/>
            <person name="Wietzorrek A."/>
            <person name="Woodward J.R."/>
            <person name="Barrell B.G."/>
            <person name="Parkhill J."/>
            <person name="Hopwood D.A."/>
        </authorList>
    </citation>
    <scope>NUCLEOTIDE SEQUENCE [LARGE SCALE GENOMIC DNA]</scope>
    <source>
        <strain>ATCC BAA-471 / A3(2) / M145</strain>
    </source>
</reference>
<feature type="chain" id="PRO_0000361266" description="Putative S-adenosyl-L-methionine-dependent methyltransferase SCO7813">
    <location>
        <begin position="1"/>
        <end position="283"/>
    </location>
</feature>
<feature type="region of interest" description="Disordered" evidence="2">
    <location>
        <begin position="264"/>
        <end position="283"/>
    </location>
</feature>
<feature type="binding site" evidence="1">
    <location>
        <position position="121"/>
    </location>
    <ligand>
        <name>S-adenosyl-L-methionine</name>
        <dbReference type="ChEBI" id="CHEBI:59789"/>
    </ligand>
</feature>
<feature type="binding site" evidence="1">
    <location>
        <begin position="150"/>
        <end position="151"/>
    </location>
    <ligand>
        <name>S-adenosyl-L-methionine</name>
        <dbReference type="ChEBI" id="CHEBI:59789"/>
    </ligand>
</feature>
<dbReference type="EC" id="2.1.1.-"/>
<dbReference type="EMBL" id="AL939132">
    <property type="protein sequence ID" value="CAC03631.1"/>
    <property type="molecule type" value="Genomic_DNA"/>
</dbReference>
<dbReference type="RefSeq" id="NP_631842.1">
    <property type="nucleotide sequence ID" value="NC_003888.3"/>
</dbReference>
<dbReference type="RefSeq" id="WP_011031934.1">
    <property type="nucleotide sequence ID" value="NZ_VNID01000036.1"/>
</dbReference>
<dbReference type="SMR" id="Q9FBX1"/>
<dbReference type="STRING" id="100226.gene:17765473"/>
<dbReference type="PaxDb" id="100226-SCO7813"/>
<dbReference type="KEGG" id="sco:SCO7813"/>
<dbReference type="PATRIC" id="fig|100226.15.peg.7923"/>
<dbReference type="eggNOG" id="COG3315">
    <property type="taxonomic scope" value="Bacteria"/>
</dbReference>
<dbReference type="HOGENOM" id="CLU_056160_2_0_11"/>
<dbReference type="InParanoid" id="Q9FBX1"/>
<dbReference type="OrthoDB" id="9806164at2"/>
<dbReference type="PhylomeDB" id="Q9FBX1"/>
<dbReference type="Proteomes" id="UP000001973">
    <property type="component" value="Chromosome"/>
</dbReference>
<dbReference type="GO" id="GO:0008168">
    <property type="term" value="F:methyltransferase activity"/>
    <property type="evidence" value="ECO:0007669"/>
    <property type="project" value="UniProtKB-KW"/>
</dbReference>
<dbReference type="GO" id="GO:0032259">
    <property type="term" value="P:methylation"/>
    <property type="evidence" value="ECO:0007669"/>
    <property type="project" value="UniProtKB-KW"/>
</dbReference>
<dbReference type="Gene3D" id="3.40.50.150">
    <property type="entry name" value="Vaccinia Virus protein VP39"/>
    <property type="match status" value="1"/>
</dbReference>
<dbReference type="InterPro" id="IPR007213">
    <property type="entry name" value="Ppm1/Ppm2/Tcmp"/>
</dbReference>
<dbReference type="InterPro" id="IPR029063">
    <property type="entry name" value="SAM-dependent_MTases_sf"/>
</dbReference>
<dbReference type="InterPro" id="IPR011610">
    <property type="entry name" value="SAM_mthyl_Trfase_ML2640-like"/>
</dbReference>
<dbReference type="NCBIfam" id="TIGR00027">
    <property type="entry name" value="mthyl_TIGR00027"/>
    <property type="match status" value="1"/>
</dbReference>
<dbReference type="PANTHER" id="PTHR43619">
    <property type="entry name" value="S-ADENOSYL-L-METHIONINE-DEPENDENT METHYLTRANSFERASE YKTD-RELATED"/>
    <property type="match status" value="1"/>
</dbReference>
<dbReference type="PANTHER" id="PTHR43619:SF2">
    <property type="entry name" value="S-ADENOSYL-L-METHIONINE-DEPENDENT METHYLTRANSFERASES SUPERFAMILY PROTEIN"/>
    <property type="match status" value="1"/>
</dbReference>
<dbReference type="Pfam" id="PF04072">
    <property type="entry name" value="LCM"/>
    <property type="match status" value="1"/>
</dbReference>
<dbReference type="SUPFAM" id="SSF53335">
    <property type="entry name" value="S-adenosyl-L-methionine-dependent methyltransferases"/>
    <property type="match status" value="1"/>
</dbReference>
<proteinExistence type="inferred from homology"/>
<sequence>MTGEQEWVQPSGVWATAVGVARVRALESEREDALFRDPLAQAFAAAGGLWPSSPPLPDDEAARRRRLAVAFSIVVRTKFLDDLLEHATASGVRQVVLLGAGMDSRAFRMAWPEGTRLFEVDTPAPLEFKASVLRQERAVAHCERITVAVDLREDWPSALAAAGHDAAIPTAWIGEGLLIYLPEDAVELLLARIGEQSASGSRMGLTLGSRGVIERFAAGAVPGSAASMWVSEMPDDPVGWLAGHGWEASCHTLRERAVAYGRPMSTLPQHEDGPGGLISAVRR</sequence>
<keyword id="KW-0489">Methyltransferase</keyword>
<keyword id="KW-1185">Reference proteome</keyword>
<keyword id="KW-0949">S-adenosyl-L-methionine</keyword>
<keyword id="KW-0808">Transferase</keyword>
<protein>
    <recommendedName>
        <fullName>Putative S-adenosyl-L-methionine-dependent methyltransferase SCO7813</fullName>
        <ecNumber>2.1.1.-</ecNumber>
    </recommendedName>
</protein>
<evidence type="ECO:0000250" key="1"/>
<evidence type="ECO:0000256" key="2">
    <source>
        <dbReference type="SAM" id="MobiDB-lite"/>
    </source>
</evidence>
<evidence type="ECO:0000305" key="3"/>
<name>Y7813_STRCO</name>
<comment type="function">
    <text evidence="1">Exhibits S-adenosyl-L-methionine-dependent methyltransferase activity.</text>
</comment>
<comment type="similarity">
    <text evidence="3">Belongs to the UPF0677 family.</text>
</comment>
<gene>
    <name type="ordered locus">SCO7813</name>
    <name type="ORF">SC8E7.10</name>
</gene>
<accession>Q9FBX1</accession>